<reference key="1">
    <citation type="journal article" date="2001" name="Lancet">
        <title>Whole genome sequencing of meticillin-resistant Staphylococcus aureus.</title>
        <authorList>
            <person name="Kuroda M."/>
            <person name="Ohta T."/>
            <person name="Uchiyama I."/>
            <person name="Baba T."/>
            <person name="Yuzawa H."/>
            <person name="Kobayashi I."/>
            <person name="Cui L."/>
            <person name="Oguchi A."/>
            <person name="Aoki K."/>
            <person name="Nagai Y."/>
            <person name="Lian J.-Q."/>
            <person name="Ito T."/>
            <person name="Kanamori M."/>
            <person name="Matsumaru H."/>
            <person name="Maruyama A."/>
            <person name="Murakami H."/>
            <person name="Hosoyama A."/>
            <person name="Mizutani-Ui Y."/>
            <person name="Takahashi N.K."/>
            <person name="Sawano T."/>
            <person name="Inoue R."/>
            <person name="Kaito C."/>
            <person name="Sekimizu K."/>
            <person name="Hirakawa H."/>
            <person name="Kuhara S."/>
            <person name="Goto S."/>
            <person name="Yabuzaki J."/>
            <person name="Kanehisa M."/>
            <person name="Yamashita A."/>
            <person name="Oshima K."/>
            <person name="Furuya K."/>
            <person name="Yoshino C."/>
            <person name="Shiba T."/>
            <person name="Hattori M."/>
            <person name="Ogasawara N."/>
            <person name="Hayashi H."/>
            <person name="Hiramatsu K."/>
        </authorList>
    </citation>
    <scope>NUCLEOTIDE SEQUENCE [LARGE SCALE GENOMIC DNA]</scope>
    <source>
        <strain>Mu50 / ATCC 700699</strain>
    </source>
</reference>
<name>FABD_STAAM</name>
<keyword id="KW-0002">3D-structure</keyword>
<keyword id="KW-0012">Acyltransferase</keyword>
<keyword id="KW-0275">Fatty acid biosynthesis</keyword>
<keyword id="KW-0276">Fatty acid metabolism</keyword>
<keyword id="KW-0444">Lipid biosynthesis</keyword>
<keyword id="KW-0443">Lipid metabolism</keyword>
<keyword id="KW-0808">Transferase</keyword>
<dbReference type="EC" id="2.3.1.39"/>
<dbReference type="EMBL" id="BA000017">
    <property type="protein sequence ID" value="BAB57392.1"/>
    <property type="molecule type" value="Genomic_DNA"/>
</dbReference>
<dbReference type="RefSeq" id="WP_000047343.1">
    <property type="nucleotide sequence ID" value="NC_002758.2"/>
</dbReference>
<dbReference type="PDB" id="3IM9">
    <property type="method" value="X-ray"/>
    <property type="resolution" value="1.46 A"/>
    <property type="chains" value="A=5-308"/>
</dbReference>
<dbReference type="PDBsum" id="3IM9"/>
<dbReference type="SMR" id="Q99UN8"/>
<dbReference type="KEGG" id="sav:SAV1230"/>
<dbReference type="HOGENOM" id="CLU_030558_0_1_9"/>
<dbReference type="PhylomeDB" id="Q99UN8"/>
<dbReference type="BRENDA" id="2.3.1.39">
    <property type="organism ID" value="3352"/>
</dbReference>
<dbReference type="UniPathway" id="UPA00094"/>
<dbReference type="EvolutionaryTrace" id="Q99UN8"/>
<dbReference type="PHI-base" id="PHI:7916"/>
<dbReference type="Proteomes" id="UP000002481">
    <property type="component" value="Chromosome"/>
</dbReference>
<dbReference type="GO" id="GO:0005829">
    <property type="term" value="C:cytosol"/>
    <property type="evidence" value="ECO:0007669"/>
    <property type="project" value="TreeGrafter"/>
</dbReference>
<dbReference type="GO" id="GO:0004314">
    <property type="term" value="F:[acyl-carrier-protein] S-malonyltransferase activity"/>
    <property type="evidence" value="ECO:0007669"/>
    <property type="project" value="UniProtKB-EC"/>
</dbReference>
<dbReference type="GO" id="GO:0006633">
    <property type="term" value="P:fatty acid biosynthetic process"/>
    <property type="evidence" value="ECO:0007669"/>
    <property type="project" value="UniProtKB-UniPathway"/>
</dbReference>
<dbReference type="FunFam" id="3.30.70.250:FF:000001">
    <property type="entry name" value="Malonyl CoA-acyl carrier protein transacylase"/>
    <property type="match status" value="1"/>
</dbReference>
<dbReference type="Gene3D" id="3.30.70.250">
    <property type="entry name" value="Malonyl-CoA ACP transacylase, ACP-binding"/>
    <property type="match status" value="1"/>
</dbReference>
<dbReference type="Gene3D" id="3.40.366.10">
    <property type="entry name" value="Malonyl-Coenzyme A Acyl Carrier Protein, domain 2"/>
    <property type="match status" value="1"/>
</dbReference>
<dbReference type="InterPro" id="IPR001227">
    <property type="entry name" value="Ac_transferase_dom_sf"/>
</dbReference>
<dbReference type="InterPro" id="IPR014043">
    <property type="entry name" value="Acyl_transferase_dom"/>
</dbReference>
<dbReference type="InterPro" id="IPR016035">
    <property type="entry name" value="Acyl_Trfase/lysoPLipase"/>
</dbReference>
<dbReference type="InterPro" id="IPR050858">
    <property type="entry name" value="Mal-CoA-ACP_Trans/PKS_FabD"/>
</dbReference>
<dbReference type="InterPro" id="IPR024925">
    <property type="entry name" value="Malonyl_CoA-ACP_transAc"/>
</dbReference>
<dbReference type="InterPro" id="IPR004410">
    <property type="entry name" value="Malonyl_CoA-ACP_transAc_FabD"/>
</dbReference>
<dbReference type="InterPro" id="IPR016036">
    <property type="entry name" value="Malonyl_transacylase_ACP-bd"/>
</dbReference>
<dbReference type="NCBIfam" id="TIGR00128">
    <property type="entry name" value="fabD"/>
    <property type="match status" value="1"/>
</dbReference>
<dbReference type="PANTHER" id="PTHR42681">
    <property type="entry name" value="MALONYL-COA-ACYL CARRIER PROTEIN TRANSACYLASE, MITOCHONDRIAL"/>
    <property type="match status" value="1"/>
</dbReference>
<dbReference type="PANTHER" id="PTHR42681:SF1">
    <property type="entry name" value="MALONYL-COA-ACYL CARRIER PROTEIN TRANSACYLASE, MITOCHONDRIAL"/>
    <property type="match status" value="1"/>
</dbReference>
<dbReference type="Pfam" id="PF00698">
    <property type="entry name" value="Acyl_transf_1"/>
    <property type="match status" value="1"/>
</dbReference>
<dbReference type="PIRSF" id="PIRSF000446">
    <property type="entry name" value="Mct"/>
    <property type="match status" value="1"/>
</dbReference>
<dbReference type="SMART" id="SM00827">
    <property type="entry name" value="PKS_AT"/>
    <property type="match status" value="1"/>
</dbReference>
<dbReference type="SUPFAM" id="SSF52151">
    <property type="entry name" value="FabD/lysophospholipase-like"/>
    <property type="match status" value="1"/>
</dbReference>
<dbReference type="SUPFAM" id="SSF55048">
    <property type="entry name" value="Probable ACP-binding domain of malonyl-CoA ACP transacylase"/>
    <property type="match status" value="1"/>
</dbReference>
<organism>
    <name type="scientific">Staphylococcus aureus (strain Mu50 / ATCC 700699)</name>
    <dbReference type="NCBI Taxonomy" id="158878"/>
    <lineage>
        <taxon>Bacteria</taxon>
        <taxon>Bacillati</taxon>
        <taxon>Bacillota</taxon>
        <taxon>Bacilli</taxon>
        <taxon>Bacillales</taxon>
        <taxon>Staphylococcaceae</taxon>
        <taxon>Staphylococcus</taxon>
    </lineage>
</organism>
<proteinExistence type="evidence at protein level"/>
<gene>
    <name type="primary">fabD</name>
    <name type="ordered locus">SAV1230</name>
</gene>
<feature type="chain" id="PRO_0000194224" description="Malonyl CoA-acyl carrier protein transacylase">
    <location>
        <begin position="1"/>
        <end position="308"/>
    </location>
</feature>
<feature type="active site" evidence="1">
    <location>
        <position position="89"/>
    </location>
</feature>
<feature type="active site" evidence="1">
    <location>
        <position position="199"/>
    </location>
</feature>
<feature type="strand" evidence="3">
    <location>
        <begin position="5"/>
        <end position="8"/>
    </location>
</feature>
<feature type="turn" evidence="3">
    <location>
        <begin position="16"/>
        <end position="25"/>
    </location>
</feature>
<feature type="helix" evidence="3">
    <location>
        <begin position="27"/>
        <end position="39"/>
    </location>
</feature>
<feature type="helix" evidence="3">
    <location>
        <begin position="44"/>
        <end position="49"/>
    </location>
</feature>
<feature type="helix" evidence="3">
    <location>
        <begin position="59"/>
        <end position="76"/>
    </location>
</feature>
<feature type="strand" evidence="3">
    <location>
        <begin position="83"/>
        <end position="88"/>
    </location>
</feature>
<feature type="helix" evidence="3">
    <location>
        <begin position="91"/>
        <end position="98"/>
    </location>
</feature>
<feature type="helix" evidence="3">
    <location>
        <begin position="104"/>
        <end position="120"/>
    </location>
</feature>
<feature type="strand" evidence="3">
    <location>
        <begin position="126"/>
        <end position="134"/>
    </location>
</feature>
<feature type="helix" evidence="3">
    <location>
        <begin position="137"/>
        <end position="147"/>
    </location>
</feature>
<feature type="strand" evidence="3">
    <location>
        <begin position="154"/>
        <end position="161"/>
    </location>
</feature>
<feature type="strand" evidence="3">
    <location>
        <begin position="164"/>
        <end position="170"/>
    </location>
</feature>
<feature type="helix" evidence="3">
    <location>
        <begin position="171"/>
        <end position="180"/>
    </location>
</feature>
<feature type="turn" evidence="3">
    <location>
        <begin position="181"/>
        <end position="185"/>
    </location>
</feature>
<feature type="strand" evidence="3">
    <location>
        <begin position="187"/>
        <end position="191"/>
    </location>
</feature>
<feature type="helix" evidence="3">
    <location>
        <begin position="201"/>
        <end position="206"/>
    </location>
</feature>
<feature type="helix" evidence="3">
    <location>
        <begin position="207"/>
        <end position="214"/>
    </location>
</feature>
<feature type="turn" evidence="3">
    <location>
        <begin position="229"/>
        <end position="231"/>
    </location>
</feature>
<feature type="strand" evidence="3">
    <location>
        <begin position="233"/>
        <end position="235"/>
    </location>
</feature>
<feature type="helix" evidence="3">
    <location>
        <begin position="238"/>
        <end position="248"/>
    </location>
</feature>
<feature type="helix" evidence="3">
    <location>
        <begin position="255"/>
        <end position="264"/>
    </location>
</feature>
<feature type="strand" evidence="3">
    <location>
        <begin position="267"/>
        <end position="276"/>
    </location>
</feature>
<feature type="helix" evidence="3">
    <location>
        <begin position="278"/>
        <end position="286"/>
    </location>
</feature>
<feature type="strand" evidence="3">
    <location>
        <begin position="288"/>
        <end position="295"/>
    </location>
</feature>
<feature type="helix" evidence="3">
    <location>
        <begin position="298"/>
        <end position="304"/>
    </location>
</feature>
<protein>
    <recommendedName>
        <fullName>Malonyl CoA-acyl carrier protein transacylase</fullName>
        <shortName>MCT</shortName>
        <ecNumber>2.3.1.39</ecNumber>
    </recommendedName>
</protein>
<sequence>MSKTAIIFPGQGAQKVGMAQDLFNNNDQATEILTSAAKTLDFDILETMFTDEEGKLGETENTQPALLTHSSALLAALKNLNPDFTMGHSLGEYSSLVAADVLSFEDAVKIVRKRGQLMAQAFPTGVGSMAAVLGLDFDKVDEICKSLSSDDKIIEPANINCPGQIVVSGHKALIDELVEKGKSLGAKRVMPLAVSGPFHSSLMKVIEEDFSSYINQFEWRDAKFPVVQNVNAQGETDKEVIKSNMVKQLYSPVQFINSTEWLIDQGVDHFIEIGPGKVLSGLIKKINRDVKLTSIQTLEDVKGWNEND</sequence>
<accession>Q99UN8</accession>
<comment type="catalytic activity">
    <reaction>
        <text>holo-[ACP] + malonyl-CoA = malonyl-[ACP] + CoA</text>
        <dbReference type="Rhea" id="RHEA:41792"/>
        <dbReference type="Rhea" id="RHEA-COMP:9623"/>
        <dbReference type="Rhea" id="RHEA-COMP:9685"/>
        <dbReference type="ChEBI" id="CHEBI:57287"/>
        <dbReference type="ChEBI" id="CHEBI:57384"/>
        <dbReference type="ChEBI" id="CHEBI:64479"/>
        <dbReference type="ChEBI" id="CHEBI:78449"/>
        <dbReference type="EC" id="2.3.1.39"/>
    </reaction>
</comment>
<comment type="pathway">
    <text>Lipid metabolism; fatty acid biosynthesis.</text>
</comment>
<comment type="similarity">
    <text evidence="2">Belongs to the FabD family.</text>
</comment>
<evidence type="ECO:0000250" key="1"/>
<evidence type="ECO:0000305" key="2"/>
<evidence type="ECO:0007829" key="3">
    <source>
        <dbReference type="PDB" id="3IM9"/>
    </source>
</evidence>